<sequence>MKTKELTQSKIEEVSLEILLRHAVKAKHGLEKESMRVNPDGTLSGTTHPIHLGSSLTNHYIKTDFAEPQLEYATHPRPKVEANIRELQDLHIFTIRKLENELIWPFSMPPVLPEEENEIPLGQYGTSHSGRWKTIYRHGLGLRYGRRMQTISGVHYNFSFSKVFLRQFLGKEISNFTKEEISSLYLHVIRNFLRRVHFLTYLTGSSPVFDFTFLPNPGSLKFEKHKNFTLYSTYATSLRMSEIGYTSKVQDTLGIHYNSLEEYVDRMCYAVHTPYPKYVSFSENKDAQLNPNYLQIENEFYSPIRPKQVPKGDERPLDALLQRGIEYIEIRSLDIDPYSPVGVCRSNLAFTQLILLDSLLKVSPSISEEENFSLKENLNSVIWEGRNPELKINVNGSKRNFQEAGAEYSESLRHYAKILDLHTGRRTYQEAIDFQIKKWKNPDKTPSGKLLSEILKRNIEFREKGIELAQENKRMFSYLEYSPGTLMKMEKETIRSFQEKEELEKQEIQTQYPTVKLCNH</sequence>
<evidence type="ECO:0000255" key="1">
    <source>
        <dbReference type="HAMAP-Rule" id="MF_00578"/>
    </source>
</evidence>
<reference key="1">
    <citation type="journal article" date="2003" name="Nature">
        <title>Unique physiological and pathogenic features of Leptospira interrogans revealed by whole-genome sequencing.</title>
        <authorList>
            <person name="Ren S.-X."/>
            <person name="Fu G."/>
            <person name="Jiang X.-G."/>
            <person name="Zeng R."/>
            <person name="Miao Y.-G."/>
            <person name="Xu H."/>
            <person name="Zhang Y.-X."/>
            <person name="Xiong H."/>
            <person name="Lu G."/>
            <person name="Lu L.-F."/>
            <person name="Jiang H.-Q."/>
            <person name="Jia J."/>
            <person name="Tu Y.-F."/>
            <person name="Jiang J.-X."/>
            <person name="Gu W.-Y."/>
            <person name="Zhang Y.-Q."/>
            <person name="Cai Z."/>
            <person name="Sheng H.-H."/>
            <person name="Yin H.-F."/>
            <person name="Zhang Y."/>
            <person name="Zhu G.-F."/>
            <person name="Wan M."/>
            <person name="Huang H.-L."/>
            <person name="Qian Z."/>
            <person name="Wang S.-Y."/>
            <person name="Ma W."/>
            <person name="Yao Z.-J."/>
            <person name="Shen Y."/>
            <person name="Qiang B.-Q."/>
            <person name="Xia Q.-C."/>
            <person name="Guo X.-K."/>
            <person name="Danchin A."/>
            <person name="Saint Girons I."/>
            <person name="Somerville R.L."/>
            <person name="Wen Y.-M."/>
            <person name="Shi M.-H."/>
            <person name="Chen Z."/>
            <person name="Xu J.-G."/>
            <person name="Zhao G.-P."/>
        </authorList>
    </citation>
    <scope>NUCLEOTIDE SEQUENCE [LARGE SCALE GENOMIC DNA]</scope>
    <source>
        <strain>56601</strain>
    </source>
</reference>
<dbReference type="EC" id="6.3.2.2" evidence="1"/>
<dbReference type="EMBL" id="AE010300">
    <property type="protein sequence ID" value="AAN49305.2"/>
    <property type="molecule type" value="Genomic_DNA"/>
</dbReference>
<dbReference type="RefSeq" id="NP_712287.2">
    <property type="nucleotide sequence ID" value="NC_004342.2"/>
</dbReference>
<dbReference type="RefSeq" id="WP_000849965.1">
    <property type="nucleotide sequence ID" value="NC_004342.2"/>
</dbReference>
<dbReference type="SMR" id="Q8F4D5"/>
<dbReference type="FunCoup" id="Q8F4D5">
    <property type="interactions" value="90"/>
</dbReference>
<dbReference type="STRING" id="189518.LA_2106"/>
<dbReference type="PaxDb" id="189518-LA_2106"/>
<dbReference type="EnsemblBacteria" id="AAN49305">
    <property type="protein sequence ID" value="AAN49305"/>
    <property type="gene ID" value="LA_2106"/>
</dbReference>
<dbReference type="KEGG" id="lil:LA_2106"/>
<dbReference type="PATRIC" id="fig|189518.3.peg.2100"/>
<dbReference type="HOGENOM" id="CLU_020728_3_0_12"/>
<dbReference type="InParanoid" id="Q8F4D5"/>
<dbReference type="OrthoDB" id="9803907at2"/>
<dbReference type="UniPathway" id="UPA00142">
    <property type="reaction ID" value="UER00209"/>
</dbReference>
<dbReference type="Proteomes" id="UP000001408">
    <property type="component" value="Chromosome I"/>
</dbReference>
<dbReference type="GO" id="GO:0005829">
    <property type="term" value="C:cytosol"/>
    <property type="evidence" value="ECO:0000318"/>
    <property type="project" value="GO_Central"/>
</dbReference>
<dbReference type="GO" id="GO:0005524">
    <property type="term" value="F:ATP binding"/>
    <property type="evidence" value="ECO:0007669"/>
    <property type="project" value="UniProtKB-KW"/>
</dbReference>
<dbReference type="GO" id="GO:0004357">
    <property type="term" value="F:glutamate-cysteine ligase activity"/>
    <property type="evidence" value="ECO:0000318"/>
    <property type="project" value="GO_Central"/>
</dbReference>
<dbReference type="GO" id="GO:0046872">
    <property type="term" value="F:metal ion binding"/>
    <property type="evidence" value="ECO:0000318"/>
    <property type="project" value="GO_Central"/>
</dbReference>
<dbReference type="GO" id="GO:0006750">
    <property type="term" value="P:glutathione biosynthetic process"/>
    <property type="evidence" value="ECO:0000318"/>
    <property type="project" value="GO_Central"/>
</dbReference>
<dbReference type="Gene3D" id="3.30.590.20">
    <property type="match status" value="1"/>
</dbReference>
<dbReference type="HAMAP" id="MF_00578">
    <property type="entry name" value="Glu_cys_ligase"/>
    <property type="match status" value="1"/>
</dbReference>
<dbReference type="InterPro" id="IPR014746">
    <property type="entry name" value="Gln_synth/guanido_kin_cat_dom"/>
</dbReference>
<dbReference type="InterPro" id="IPR007370">
    <property type="entry name" value="Glu_cys_ligase"/>
</dbReference>
<dbReference type="InterPro" id="IPR006334">
    <property type="entry name" value="Glut_cys_ligase"/>
</dbReference>
<dbReference type="NCBIfam" id="TIGR01434">
    <property type="entry name" value="glu_cys_ligase"/>
    <property type="match status" value="1"/>
</dbReference>
<dbReference type="PANTHER" id="PTHR38761">
    <property type="entry name" value="GLUTAMATE--CYSTEINE LIGASE"/>
    <property type="match status" value="1"/>
</dbReference>
<dbReference type="PANTHER" id="PTHR38761:SF1">
    <property type="entry name" value="GLUTAMATE--CYSTEINE LIGASE"/>
    <property type="match status" value="1"/>
</dbReference>
<dbReference type="Pfam" id="PF04262">
    <property type="entry name" value="Glu_cys_ligase"/>
    <property type="match status" value="1"/>
</dbReference>
<dbReference type="SUPFAM" id="SSF55931">
    <property type="entry name" value="Glutamine synthetase/guanido kinase"/>
    <property type="match status" value="1"/>
</dbReference>
<organism>
    <name type="scientific">Leptospira interrogans serogroup Icterohaemorrhagiae serovar Lai (strain 56601)</name>
    <dbReference type="NCBI Taxonomy" id="189518"/>
    <lineage>
        <taxon>Bacteria</taxon>
        <taxon>Pseudomonadati</taxon>
        <taxon>Spirochaetota</taxon>
        <taxon>Spirochaetia</taxon>
        <taxon>Leptospirales</taxon>
        <taxon>Leptospiraceae</taxon>
        <taxon>Leptospira</taxon>
    </lineage>
</organism>
<accession>Q8F4D5</accession>
<name>GSH1_LEPIN</name>
<comment type="catalytic activity">
    <reaction evidence="1">
        <text>L-cysteine + L-glutamate + ATP = gamma-L-glutamyl-L-cysteine + ADP + phosphate + H(+)</text>
        <dbReference type="Rhea" id="RHEA:13285"/>
        <dbReference type="ChEBI" id="CHEBI:15378"/>
        <dbReference type="ChEBI" id="CHEBI:29985"/>
        <dbReference type="ChEBI" id="CHEBI:30616"/>
        <dbReference type="ChEBI" id="CHEBI:35235"/>
        <dbReference type="ChEBI" id="CHEBI:43474"/>
        <dbReference type="ChEBI" id="CHEBI:58173"/>
        <dbReference type="ChEBI" id="CHEBI:456216"/>
        <dbReference type="EC" id="6.3.2.2"/>
    </reaction>
</comment>
<comment type="pathway">
    <text evidence="1">Sulfur metabolism; glutathione biosynthesis; glutathione from L-cysteine and L-glutamate: step 1/2.</text>
</comment>
<comment type="similarity">
    <text evidence="1">Belongs to the glutamate--cysteine ligase type 1 family. Type 1 subfamily.</text>
</comment>
<feature type="chain" id="PRO_0000192529" description="Glutamate--cysteine ligase">
    <location>
        <begin position="1"/>
        <end position="520"/>
    </location>
</feature>
<gene>
    <name evidence="1" type="primary">gshA</name>
    <name type="ordered locus">LA_2106</name>
</gene>
<keyword id="KW-0067">ATP-binding</keyword>
<keyword id="KW-0317">Glutathione biosynthesis</keyword>
<keyword id="KW-0436">Ligase</keyword>
<keyword id="KW-0547">Nucleotide-binding</keyword>
<keyword id="KW-1185">Reference proteome</keyword>
<proteinExistence type="inferred from homology"/>
<protein>
    <recommendedName>
        <fullName evidence="1">Glutamate--cysteine ligase</fullName>
        <ecNumber evidence="1">6.3.2.2</ecNumber>
    </recommendedName>
    <alternativeName>
        <fullName evidence="1">Gamma-ECS</fullName>
        <shortName evidence="1">GCS</shortName>
    </alternativeName>
    <alternativeName>
        <fullName evidence="1">Gamma-glutamylcysteine synthetase</fullName>
    </alternativeName>
</protein>